<organism>
    <name type="scientific">Xenopus laevis</name>
    <name type="common">African clawed frog</name>
    <dbReference type="NCBI Taxonomy" id="8355"/>
    <lineage>
        <taxon>Eukaryota</taxon>
        <taxon>Metazoa</taxon>
        <taxon>Chordata</taxon>
        <taxon>Craniata</taxon>
        <taxon>Vertebrata</taxon>
        <taxon>Euteleostomi</taxon>
        <taxon>Amphibia</taxon>
        <taxon>Batrachia</taxon>
        <taxon>Anura</taxon>
        <taxon>Pipoidea</taxon>
        <taxon>Pipidae</taxon>
        <taxon>Xenopodinae</taxon>
        <taxon>Xenopus</taxon>
        <taxon>Xenopus</taxon>
    </lineage>
</organism>
<proteinExistence type="evidence at transcript level"/>
<gene>
    <name type="primary">nrn1-a</name>
    <name type="synonym">cpg15</name>
</gene>
<accession>Q90ZM9</accession>
<accession>Q63ZL9</accession>
<sequence length="144" mass="15889">MGLKLSGRYIFLVLAVHLAYLLQAVKATGKCDAVFKGLSDCMLTLGDKVANYPQDLEEKKNLDTICSYWDDFHVCTVTALADCQEGAADIWEKLKRQSKNLNIQGSLFELCPGSAGAPGQRLLFPAFLPLLMVFLSTLFILVLQ</sequence>
<reference key="1">
    <citation type="journal article" date="2001" name="J. Comp. Neurol.">
        <title>Developmental regulation of CPG15 expression in Xenopus.</title>
        <authorList>
            <person name="Nedivi E."/>
            <person name="Javaherian A."/>
            <person name="Cantallops I."/>
            <person name="Cline H.T."/>
        </authorList>
    </citation>
    <scope>NUCLEOTIDE SEQUENCE [MRNA]</scope>
    <scope>FUNCTION</scope>
    <scope>TISSUE SPECIFICITY</scope>
    <scope>DEVELOPMENTAL STAGE</scope>
    <source>
        <tissue>Brain</tissue>
    </source>
</reference>
<reference key="2">
    <citation type="submission" date="2004-09" db="EMBL/GenBank/DDBJ databases">
        <authorList>
            <consortium name="NIH - Xenopus Gene Collection (XGC) project"/>
        </authorList>
    </citation>
    <scope>NUCLEOTIDE SEQUENCE [LARGE SCALE MRNA]</scope>
    <source>
        <tissue>Eye</tissue>
    </source>
</reference>
<protein>
    <recommendedName>
        <fullName>Neuritin-A</fullName>
    </recommendedName>
    <alternativeName>
        <fullName>Candidate plasticity gene 15 protein</fullName>
    </alternativeName>
</protein>
<name>NRN1A_XENLA</name>
<comment type="function">
    <text evidence="2">Modulates postsynaptic dendritic arbor elaboration and synaptic maturation.</text>
</comment>
<comment type="subcellular location">
    <subcellularLocation>
        <location evidence="3">Cell membrane</location>
        <topology evidence="3">Lipid-anchor</topology>
        <topology evidence="3">GPI-anchor</topology>
    </subcellularLocation>
</comment>
<comment type="tissue specificity">
    <text evidence="2">Expressed in sensory regions of the brain including the visual, auditory and olfactory systems. Within the retina, only expressed in the retinal ganglion cells. Concentrated in axon tracts including retinal axons.</text>
</comment>
<comment type="developmental stage">
    <text evidence="2">First detected in the developing spinal cord and becomes widespread as development proceeds.</text>
</comment>
<comment type="similarity">
    <text evidence="3">Belongs to the neuritin family.</text>
</comment>
<dbReference type="EMBL" id="AF378092">
    <property type="protein sequence ID" value="AAK55417.1"/>
    <property type="molecule type" value="mRNA"/>
</dbReference>
<dbReference type="EMBL" id="BC082893">
    <property type="protein sequence ID" value="AAH82893.1"/>
    <property type="molecule type" value="mRNA"/>
</dbReference>
<dbReference type="RefSeq" id="NP_001079157.1">
    <property type="nucleotide sequence ID" value="NM_001085688.1"/>
</dbReference>
<dbReference type="DNASU" id="373709"/>
<dbReference type="GeneID" id="373709"/>
<dbReference type="KEGG" id="xla:373709"/>
<dbReference type="AGR" id="Xenbase:XB-GENE-6252721"/>
<dbReference type="CTD" id="373709"/>
<dbReference type="Xenbase" id="XB-GENE-6252721">
    <property type="gene designation" value="nrn1.S"/>
</dbReference>
<dbReference type="OrthoDB" id="9928047at2759"/>
<dbReference type="Proteomes" id="UP000186698">
    <property type="component" value="Chromosome 6S"/>
</dbReference>
<dbReference type="Bgee" id="373709">
    <property type="expression patterns" value="Expressed in brain and 3 other cell types or tissues"/>
</dbReference>
<dbReference type="GO" id="GO:0005886">
    <property type="term" value="C:plasma membrane"/>
    <property type="evidence" value="ECO:0000318"/>
    <property type="project" value="GO_Central"/>
</dbReference>
<dbReference type="GO" id="GO:0098552">
    <property type="term" value="C:side of membrane"/>
    <property type="evidence" value="ECO:0007669"/>
    <property type="project" value="UniProtKB-KW"/>
</dbReference>
<dbReference type="GO" id="GO:1990138">
    <property type="term" value="P:neuron projection extension"/>
    <property type="evidence" value="ECO:0000318"/>
    <property type="project" value="GO_Central"/>
</dbReference>
<dbReference type="InterPro" id="IPR026144">
    <property type="entry name" value="Neuritin_fam"/>
</dbReference>
<dbReference type="PANTHER" id="PTHR15902:SF1">
    <property type="entry name" value="NEURITIN"/>
    <property type="match status" value="1"/>
</dbReference>
<dbReference type="PANTHER" id="PTHR15902">
    <property type="entry name" value="NEURITIN-RELATED"/>
    <property type="match status" value="1"/>
</dbReference>
<dbReference type="Pfam" id="PF15056">
    <property type="entry name" value="NRN1"/>
    <property type="match status" value="1"/>
</dbReference>
<feature type="signal peptide" evidence="1">
    <location>
        <begin position="1"/>
        <end position="27"/>
    </location>
</feature>
<feature type="chain" id="PRO_0000262520" description="Neuritin-A">
    <location>
        <begin position="28"/>
        <end position="114"/>
    </location>
</feature>
<feature type="propeptide" id="PRO_0000262521" description="Removed in mature form" evidence="1">
    <location>
        <begin position="115"/>
        <end position="144"/>
    </location>
</feature>
<feature type="lipid moiety-binding region" description="GPI-anchor amidated serine" evidence="1">
    <location>
        <position position="114"/>
    </location>
</feature>
<feature type="sequence conflict" description="In Ref. 2; AAH82893." evidence="3" ref="2">
    <original>L</original>
    <variation>W</variation>
    <location>
        <position position="141"/>
    </location>
</feature>
<evidence type="ECO:0000255" key="1"/>
<evidence type="ECO:0000269" key="2">
    <source>
    </source>
</evidence>
<evidence type="ECO:0000305" key="3"/>
<keyword id="KW-1003">Cell membrane</keyword>
<keyword id="KW-0325">Glycoprotein</keyword>
<keyword id="KW-0336">GPI-anchor</keyword>
<keyword id="KW-0449">Lipoprotein</keyword>
<keyword id="KW-0472">Membrane</keyword>
<keyword id="KW-1185">Reference proteome</keyword>
<keyword id="KW-0732">Signal</keyword>